<keyword id="KW-0963">Cytoplasm</keyword>
<keyword id="KW-0378">Hydrolase</keyword>
<keyword id="KW-0546">Nucleotide metabolism</keyword>
<keyword id="KW-1185">Reference proteome</keyword>
<proteinExistence type="inferred from homology"/>
<organism>
    <name type="scientific">Porphyromonas gingivalis (strain ATCC BAA-308 / W83)</name>
    <dbReference type="NCBI Taxonomy" id="242619"/>
    <lineage>
        <taxon>Bacteria</taxon>
        <taxon>Pseudomonadati</taxon>
        <taxon>Bacteroidota</taxon>
        <taxon>Bacteroidia</taxon>
        <taxon>Bacteroidales</taxon>
        <taxon>Porphyromonadaceae</taxon>
        <taxon>Porphyromonas</taxon>
    </lineage>
</organism>
<feature type="chain" id="PRO_0000123040" description="dTTP/UTP pyrophosphatase">
    <location>
        <begin position="1"/>
        <end position="199"/>
    </location>
</feature>
<feature type="active site" description="Proton acceptor" evidence="1">
    <location>
        <position position="79"/>
    </location>
</feature>
<feature type="site" description="Important for substrate specificity" evidence="1">
    <location>
        <position position="18"/>
    </location>
</feature>
<feature type="site" description="Important for substrate specificity" evidence="1">
    <location>
        <position position="80"/>
    </location>
</feature>
<feature type="site" description="Important for substrate specificity" evidence="1">
    <location>
        <position position="162"/>
    </location>
</feature>
<protein>
    <recommendedName>
        <fullName evidence="1">dTTP/UTP pyrophosphatase</fullName>
        <shortName evidence="1">dTTPase/UTPase</shortName>
        <ecNumber evidence="1">3.6.1.9</ecNumber>
    </recommendedName>
    <alternativeName>
        <fullName evidence="1">Nucleoside triphosphate pyrophosphatase</fullName>
    </alternativeName>
    <alternativeName>
        <fullName evidence="1">Nucleotide pyrophosphatase</fullName>
        <shortName evidence="1">Nucleotide PPase</shortName>
    </alternativeName>
</protein>
<comment type="function">
    <text evidence="1">Nucleoside triphosphate pyrophosphatase that hydrolyzes dTTP and UTP. May have a dual role in cell division arrest and in preventing the incorporation of modified nucleotides into cellular nucleic acids.</text>
</comment>
<comment type="catalytic activity">
    <reaction evidence="1">
        <text>dTTP + H2O = dTMP + diphosphate + H(+)</text>
        <dbReference type="Rhea" id="RHEA:28534"/>
        <dbReference type="ChEBI" id="CHEBI:15377"/>
        <dbReference type="ChEBI" id="CHEBI:15378"/>
        <dbReference type="ChEBI" id="CHEBI:33019"/>
        <dbReference type="ChEBI" id="CHEBI:37568"/>
        <dbReference type="ChEBI" id="CHEBI:63528"/>
        <dbReference type="EC" id="3.6.1.9"/>
    </reaction>
</comment>
<comment type="catalytic activity">
    <reaction evidence="1">
        <text>UTP + H2O = UMP + diphosphate + H(+)</text>
        <dbReference type="Rhea" id="RHEA:29395"/>
        <dbReference type="ChEBI" id="CHEBI:15377"/>
        <dbReference type="ChEBI" id="CHEBI:15378"/>
        <dbReference type="ChEBI" id="CHEBI:33019"/>
        <dbReference type="ChEBI" id="CHEBI:46398"/>
        <dbReference type="ChEBI" id="CHEBI:57865"/>
        <dbReference type="EC" id="3.6.1.9"/>
    </reaction>
</comment>
<comment type="cofactor">
    <cofactor evidence="1">
        <name>a divalent metal cation</name>
        <dbReference type="ChEBI" id="CHEBI:60240"/>
    </cofactor>
</comment>
<comment type="subcellular location">
    <subcellularLocation>
        <location evidence="1">Cytoplasm</location>
    </subcellularLocation>
</comment>
<comment type="similarity">
    <text evidence="1">Belongs to the Maf family. YhdE subfamily.</text>
</comment>
<comment type="sequence caution" evidence="2">
    <conflict type="erroneous initiation">
        <sequence resource="EMBL-CDS" id="AAQ65836"/>
    </conflict>
</comment>
<dbReference type="EC" id="3.6.1.9" evidence="1"/>
<dbReference type="EMBL" id="AE015924">
    <property type="protein sequence ID" value="AAQ65836.1"/>
    <property type="status" value="ALT_INIT"/>
    <property type="molecule type" value="Genomic_DNA"/>
</dbReference>
<dbReference type="RefSeq" id="WP_005873615.1">
    <property type="nucleotide sequence ID" value="NC_002950.2"/>
</dbReference>
<dbReference type="SMR" id="Q7MWG0"/>
<dbReference type="STRING" id="242619.PG_0657"/>
<dbReference type="EnsemblBacteria" id="AAQ65836">
    <property type="protein sequence ID" value="AAQ65836"/>
    <property type="gene ID" value="PG_0657"/>
</dbReference>
<dbReference type="KEGG" id="pgi:PG_0657"/>
<dbReference type="PATRIC" id="fig|242619.8.peg.600"/>
<dbReference type="eggNOG" id="COG0424">
    <property type="taxonomic scope" value="Bacteria"/>
</dbReference>
<dbReference type="HOGENOM" id="CLU_040416_0_0_10"/>
<dbReference type="BioCyc" id="PGIN242619:G1G02-609-MONOMER"/>
<dbReference type="Proteomes" id="UP000000588">
    <property type="component" value="Chromosome"/>
</dbReference>
<dbReference type="GO" id="GO:0005737">
    <property type="term" value="C:cytoplasm"/>
    <property type="evidence" value="ECO:0007669"/>
    <property type="project" value="UniProtKB-SubCell"/>
</dbReference>
<dbReference type="GO" id="GO:0036218">
    <property type="term" value="F:dTTP diphosphatase activity"/>
    <property type="evidence" value="ECO:0007669"/>
    <property type="project" value="RHEA"/>
</dbReference>
<dbReference type="GO" id="GO:0036221">
    <property type="term" value="F:UTP diphosphatase activity"/>
    <property type="evidence" value="ECO:0007669"/>
    <property type="project" value="RHEA"/>
</dbReference>
<dbReference type="GO" id="GO:0009117">
    <property type="term" value="P:nucleotide metabolic process"/>
    <property type="evidence" value="ECO:0007669"/>
    <property type="project" value="UniProtKB-KW"/>
</dbReference>
<dbReference type="CDD" id="cd00555">
    <property type="entry name" value="Maf"/>
    <property type="match status" value="1"/>
</dbReference>
<dbReference type="Gene3D" id="3.90.950.10">
    <property type="match status" value="1"/>
</dbReference>
<dbReference type="HAMAP" id="MF_00528">
    <property type="entry name" value="Maf"/>
    <property type="match status" value="1"/>
</dbReference>
<dbReference type="InterPro" id="IPR029001">
    <property type="entry name" value="ITPase-like_fam"/>
</dbReference>
<dbReference type="InterPro" id="IPR003697">
    <property type="entry name" value="Maf-like"/>
</dbReference>
<dbReference type="NCBIfam" id="TIGR00172">
    <property type="entry name" value="maf"/>
    <property type="match status" value="1"/>
</dbReference>
<dbReference type="PANTHER" id="PTHR43213">
    <property type="entry name" value="BIFUNCTIONAL DTTP/UTP PYROPHOSPHATASE/METHYLTRANSFERASE PROTEIN-RELATED"/>
    <property type="match status" value="1"/>
</dbReference>
<dbReference type="PANTHER" id="PTHR43213:SF5">
    <property type="entry name" value="BIFUNCTIONAL DTTP_UTP PYROPHOSPHATASE_METHYLTRANSFERASE PROTEIN-RELATED"/>
    <property type="match status" value="1"/>
</dbReference>
<dbReference type="Pfam" id="PF02545">
    <property type="entry name" value="Maf"/>
    <property type="match status" value="1"/>
</dbReference>
<dbReference type="PIRSF" id="PIRSF006305">
    <property type="entry name" value="Maf"/>
    <property type="match status" value="1"/>
</dbReference>
<dbReference type="SUPFAM" id="SSF52972">
    <property type="entry name" value="ITPase-like"/>
    <property type="match status" value="1"/>
</dbReference>
<gene>
    <name type="primary">maf</name>
    <name type="ordered locus">PG_0657</name>
</gene>
<sequence>MLDNLKKYKIVLGSQSPRRKELLSGLDIRFEQKAMPDIAEDYPAGLDREKVPLYLARMKAEAYRSKGMMQDSTLLITADTVVIIDGTILGKPQDREEAARMLRTLSGRTHQVVTGVCISHRWETRAFSCSSLVTFAHLSDEEIDYYLERYRPYDKAGSYGIQEWIGYIAIQRVEGSFYNVMGLPVHLLYNELKDFGESN</sequence>
<accession>Q7MWG0</accession>
<evidence type="ECO:0000255" key="1">
    <source>
        <dbReference type="HAMAP-Rule" id="MF_00528"/>
    </source>
</evidence>
<evidence type="ECO:0000305" key="2"/>
<reference key="1">
    <citation type="journal article" date="2003" name="J. Bacteriol.">
        <title>Complete genome sequence of the oral pathogenic bacterium Porphyromonas gingivalis strain W83.</title>
        <authorList>
            <person name="Nelson K.E."/>
            <person name="Fleischmann R.D."/>
            <person name="DeBoy R.T."/>
            <person name="Paulsen I.T."/>
            <person name="Fouts D.E."/>
            <person name="Eisen J.A."/>
            <person name="Daugherty S.C."/>
            <person name="Dodson R.J."/>
            <person name="Durkin A.S."/>
            <person name="Gwinn M.L."/>
            <person name="Haft D.H."/>
            <person name="Kolonay J.F."/>
            <person name="Nelson W.C."/>
            <person name="Mason T.M."/>
            <person name="Tallon L."/>
            <person name="Gray J."/>
            <person name="Granger D."/>
            <person name="Tettelin H."/>
            <person name="Dong H."/>
            <person name="Galvin J.L."/>
            <person name="Duncan M.J."/>
            <person name="Dewhirst F.E."/>
            <person name="Fraser C.M."/>
        </authorList>
    </citation>
    <scope>NUCLEOTIDE SEQUENCE [LARGE SCALE GENOMIC DNA]</scope>
    <source>
        <strain>ATCC BAA-308 / W83</strain>
    </source>
</reference>
<name>NTPPA_PORGI</name>